<comment type="function">
    <text evidence="1">Putative acid-stable proteinase inhibitor.</text>
</comment>
<comment type="subcellular location">
    <subcellularLocation>
        <location evidence="3">Secreted</location>
    </subcellularLocation>
</comment>
<name>WFD13_MOUSE</name>
<dbReference type="EMBL" id="AY542486">
    <property type="protein sequence ID" value="AAT27474.1"/>
    <property type="molecule type" value="mRNA"/>
</dbReference>
<dbReference type="EMBL" id="AY542487">
    <property type="protein sequence ID" value="AAT27475.1"/>
    <property type="molecule type" value="mRNA"/>
</dbReference>
<dbReference type="EMBL" id="AL591127">
    <property type="status" value="NOT_ANNOTATED_CDS"/>
    <property type="molecule type" value="Genomic_DNA"/>
</dbReference>
<dbReference type="EMBL" id="BC145778">
    <property type="protein sequence ID" value="AAI45779.1"/>
    <property type="molecule type" value="mRNA"/>
</dbReference>
<dbReference type="EMBL" id="BC145780">
    <property type="protein sequence ID" value="AAI45781.1"/>
    <property type="molecule type" value="mRNA"/>
</dbReference>
<dbReference type="EMBL" id="BN000360">
    <property type="protein sequence ID" value="CAE51412.1"/>
    <property type="molecule type" value="mRNA"/>
</dbReference>
<dbReference type="CCDS" id="CCDS38327.1"/>
<dbReference type="RefSeq" id="NP_001012722.1">
    <property type="nucleotide sequence ID" value="NM_001012704.1"/>
</dbReference>
<dbReference type="SMR" id="Q5DQQ6"/>
<dbReference type="FunCoup" id="Q5DQQ6">
    <property type="interactions" value="6"/>
</dbReference>
<dbReference type="STRING" id="10090.ENSMUSP00000085594"/>
<dbReference type="PaxDb" id="10090-ENSMUSP00000085594"/>
<dbReference type="ProteomicsDB" id="297845"/>
<dbReference type="Antibodypedia" id="82284">
    <property type="antibodies" value="1 antibodies from 1 providers"/>
</dbReference>
<dbReference type="DNASU" id="408190"/>
<dbReference type="Ensembl" id="ENSMUST00000088260.2">
    <property type="protein sequence ID" value="ENSMUSP00000085594.2"/>
    <property type="gene ID" value="ENSMUSG00000067704.2"/>
</dbReference>
<dbReference type="GeneID" id="408190"/>
<dbReference type="KEGG" id="mmu:408190"/>
<dbReference type="UCSC" id="uc008nvq.1">
    <property type="organism name" value="mouse"/>
</dbReference>
<dbReference type="AGR" id="MGI:3582777"/>
<dbReference type="CTD" id="164237"/>
<dbReference type="MGI" id="MGI:3582777">
    <property type="gene designation" value="Wfdc13"/>
</dbReference>
<dbReference type="VEuPathDB" id="HostDB:ENSMUSG00000067704"/>
<dbReference type="eggNOG" id="KOG4295">
    <property type="taxonomic scope" value="Eukaryota"/>
</dbReference>
<dbReference type="GeneTree" id="ENSGT00390000012268"/>
<dbReference type="HOGENOM" id="CLU_2612246_0_0_1"/>
<dbReference type="InParanoid" id="Q5DQQ6"/>
<dbReference type="OMA" id="GSPKQHF"/>
<dbReference type="OrthoDB" id="9836967at2759"/>
<dbReference type="PhylomeDB" id="Q5DQQ6"/>
<dbReference type="TreeFam" id="TF341262"/>
<dbReference type="BioGRID-ORCS" id="408190">
    <property type="hits" value="2 hits in 78 CRISPR screens"/>
</dbReference>
<dbReference type="PRO" id="PR:Q5DQQ6"/>
<dbReference type="Proteomes" id="UP000000589">
    <property type="component" value="Chromosome 2"/>
</dbReference>
<dbReference type="RNAct" id="Q5DQQ6">
    <property type="molecule type" value="protein"/>
</dbReference>
<dbReference type="Bgee" id="ENSMUSG00000067704">
    <property type="expression patterns" value="Expressed in epiblast cell in embryo and 12 other cell types or tissues"/>
</dbReference>
<dbReference type="GO" id="GO:0005576">
    <property type="term" value="C:extracellular region"/>
    <property type="evidence" value="ECO:0007669"/>
    <property type="project" value="UniProtKB-SubCell"/>
</dbReference>
<dbReference type="GO" id="GO:0004867">
    <property type="term" value="F:serine-type endopeptidase inhibitor activity"/>
    <property type="evidence" value="ECO:0007669"/>
    <property type="project" value="UniProtKB-KW"/>
</dbReference>
<reference key="1">
    <citation type="journal article" date="2005" name="Biochem. Biophys. Res. Commun.">
        <title>The evolution of a genetic locus encoding small serine proteinase inhibitors.</title>
        <authorList>
            <person name="Clauss A."/>
            <person name="Lilja H."/>
            <person name="Lundwall A."/>
        </authorList>
    </citation>
    <scope>NUCLEOTIDE SEQUENCE [MRNA]</scope>
    <source>
        <strain>C57BL/6J</strain>
    </source>
</reference>
<reference key="2">
    <citation type="journal article" date="2009" name="PLoS Biol.">
        <title>Lineage-specific biology revealed by a finished genome assembly of the mouse.</title>
        <authorList>
            <person name="Church D.M."/>
            <person name="Goodstadt L."/>
            <person name="Hillier L.W."/>
            <person name="Zody M.C."/>
            <person name="Goldstein S."/>
            <person name="She X."/>
            <person name="Bult C.J."/>
            <person name="Agarwala R."/>
            <person name="Cherry J.L."/>
            <person name="DiCuccio M."/>
            <person name="Hlavina W."/>
            <person name="Kapustin Y."/>
            <person name="Meric P."/>
            <person name="Maglott D."/>
            <person name="Birtle Z."/>
            <person name="Marques A.C."/>
            <person name="Graves T."/>
            <person name="Zhou S."/>
            <person name="Teague B."/>
            <person name="Potamousis K."/>
            <person name="Churas C."/>
            <person name="Place M."/>
            <person name="Herschleb J."/>
            <person name="Runnheim R."/>
            <person name="Forrest D."/>
            <person name="Amos-Landgraf J."/>
            <person name="Schwartz D.C."/>
            <person name="Cheng Z."/>
            <person name="Lindblad-Toh K."/>
            <person name="Eichler E.E."/>
            <person name="Ponting C.P."/>
        </authorList>
    </citation>
    <scope>NUCLEOTIDE SEQUENCE [LARGE SCALE GENOMIC DNA]</scope>
    <source>
        <strain>C57BL/6J</strain>
    </source>
</reference>
<reference key="3">
    <citation type="journal article" date="2004" name="Genome Res.">
        <title>The status, quality, and expansion of the NIH full-length cDNA project: the Mammalian Gene Collection (MGC).</title>
        <authorList>
            <consortium name="The MGC Project Team"/>
        </authorList>
    </citation>
    <scope>NUCLEOTIDE SEQUENCE [LARGE SCALE MRNA]</scope>
    <source>
        <tissue>Brain</tissue>
    </source>
</reference>
<reference key="4">
    <citation type="journal article" date="2004" name="Genome Res.">
        <title>A genomic analysis of rat proteases and protease inhibitors.</title>
        <authorList>
            <person name="Puente X.S."/>
            <person name="Lopez-Otin C."/>
        </authorList>
    </citation>
    <scope>IDENTIFICATION</scope>
</reference>
<protein>
    <recommendedName>
        <fullName>WAP four-disulfide core domain protein 13</fullName>
    </recommendedName>
    <alternativeName>
        <fullName>WAP four-disulfide core domain 13-like 1</fullName>
    </alternativeName>
</protein>
<organism>
    <name type="scientific">Mus musculus</name>
    <name type="common">Mouse</name>
    <dbReference type="NCBI Taxonomy" id="10090"/>
    <lineage>
        <taxon>Eukaryota</taxon>
        <taxon>Metazoa</taxon>
        <taxon>Chordata</taxon>
        <taxon>Craniata</taxon>
        <taxon>Vertebrata</taxon>
        <taxon>Euteleostomi</taxon>
        <taxon>Mammalia</taxon>
        <taxon>Eutheria</taxon>
        <taxon>Euarchontoglires</taxon>
        <taxon>Glires</taxon>
        <taxon>Rodentia</taxon>
        <taxon>Myomorpha</taxon>
        <taxon>Muroidea</taxon>
        <taxon>Muridae</taxon>
        <taxon>Murinae</taxon>
        <taxon>Mus</taxon>
        <taxon>Mus</taxon>
    </lineage>
</organism>
<gene>
    <name type="primary">Wfdc13</name>
    <name type="synonym">Wfdc13l1</name>
</gene>
<evidence type="ECO:0000250" key="1"/>
<evidence type="ECO:0000255" key="2"/>
<evidence type="ECO:0000305" key="3"/>
<proteinExistence type="inferred from homology"/>
<feature type="signal peptide" evidence="2">
    <location>
        <begin position="1"/>
        <end position="22"/>
    </location>
</feature>
<feature type="chain" id="PRO_0000415848" description="WAP four-disulfide core domain protein 13">
    <location>
        <begin position="23"/>
        <end position="81"/>
    </location>
</feature>
<feature type="domain" description="WAP">
    <location>
        <begin position="31"/>
        <end position="74"/>
    </location>
</feature>
<feature type="disulfide bond" evidence="1">
    <location>
        <begin position="38"/>
        <end position="62"/>
    </location>
</feature>
<feature type="disulfide bond" evidence="1">
    <location>
        <begin position="45"/>
        <end position="66"/>
    </location>
</feature>
<feature type="disulfide bond" evidence="1">
    <location>
        <begin position="49"/>
        <end position="61"/>
    </location>
</feature>
<feature type="disulfide bond" evidence="1">
    <location>
        <begin position="55"/>
        <end position="70"/>
    </location>
</feature>
<keyword id="KW-1015">Disulfide bond</keyword>
<keyword id="KW-0646">Protease inhibitor</keyword>
<keyword id="KW-1185">Reference proteome</keyword>
<keyword id="KW-0964">Secreted</keyword>
<keyword id="KW-0722">Serine protease inhibitor</keyword>
<keyword id="KW-0732">Signal</keyword>
<sequence length="81" mass="8798">MRPVSPLQLLLVLSLAPQPVLGSPKQYFLKYILEPPPCRSEPGACNMFCTQQEECPEPLQCCSAYCGIVCTSNQAPVLGLS</sequence>
<accession>Q5DQQ6</accession>
<accession>Q6IE33</accession>